<accession>Q1QDE0</accession>
<proteinExistence type="inferred from homology"/>
<organism>
    <name type="scientific">Psychrobacter cryohalolentis (strain ATCC BAA-1226 / DSM 17306 / VKM B-2378 / K5)</name>
    <dbReference type="NCBI Taxonomy" id="335284"/>
    <lineage>
        <taxon>Bacteria</taxon>
        <taxon>Pseudomonadati</taxon>
        <taxon>Pseudomonadota</taxon>
        <taxon>Gammaproteobacteria</taxon>
        <taxon>Moraxellales</taxon>
        <taxon>Moraxellaceae</taxon>
        <taxon>Psychrobacter</taxon>
    </lineage>
</organism>
<feature type="chain" id="PRO_0000364657" description="Fructose-1,6-bisphosphatase class 1">
    <location>
        <begin position="1"/>
        <end position="327"/>
    </location>
</feature>
<feature type="binding site" evidence="1">
    <location>
        <position position="84"/>
    </location>
    <ligand>
        <name>Mg(2+)</name>
        <dbReference type="ChEBI" id="CHEBI:18420"/>
        <label>1</label>
    </ligand>
</feature>
<feature type="binding site" evidence="1">
    <location>
        <position position="103"/>
    </location>
    <ligand>
        <name>Mg(2+)</name>
        <dbReference type="ChEBI" id="CHEBI:18420"/>
        <label>1</label>
    </ligand>
</feature>
<feature type="binding site" evidence="1">
    <location>
        <position position="103"/>
    </location>
    <ligand>
        <name>Mg(2+)</name>
        <dbReference type="ChEBI" id="CHEBI:18420"/>
        <label>2</label>
    </ligand>
</feature>
<feature type="binding site" evidence="1">
    <location>
        <position position="105"/>
    </location>
    <ligand>
        <name>Mg(2+)</name>
        <dbReference type="ChEBI" id="CHEBI:18420"/>
        <label>1</label>
    </ligand>
</feature>
<feature type="binding site" evidence="1">
    <location>
        <begin position="106"/>
        <end position="109"/>
    </location>
    <ligand>
        <name>substrate</name>
    </ligand>
</feature>
<feature type="binding site" evidence="1">
    <location>
        <position position="106"/>
    </location>
    <ligand>
        <name>Mg(2+)</name>
        <dbReference type="ChEBI" id="CHEBI:18420"/>
        <label>2</label>
    </ligand>
</feature>
<feature type="binding site" evidence="1">
    <location>
        <position position="198"/>
    </location>
    <ligand>
        <name>substrate</name>
    </ligand>
</feature>
<feature type="binding site" evidence="1">
    <location>
        <position position="264"/>
    </location>
    <ligand>
        <name>substrate</name>
    </ligand>
</feature>
<feature type="binding site" evidence="1">
    <location>
        <position position="270"/>
    </location>
    <ligand>
        <name>Mg(2+)</name>
        <dbReference type="ChEBI" id="CHEBI:18420"/>
        <label>2</label>
    </ligand>
</feature>
<reference key="1">
    <citation type="submission" date="2006-03" db="EMBL/GenBank/DDBJ databases">
        <title>Complete sequence of chromosome of Psychrobacter cryohalolentis K5.</title>
        <authorList>
            <consortium name="US DOE Joint Genome Institute"/>
            <person name="Copeland A."/>
            <person name="Lucas S."/>
            <person name="Lapidus A."/>
            <person name="Barry K."/>
            <person name="Detter J.C."/>
            <person name="Glavina T."/>
            <person name="Hammon N."/>
            <person name="Israni S."/>
            <person name="Dalin E."/>
            <person name="Tice H."/>
            <person name="Pitluck S."/>
            <person name="Brettin T."/>
            <person name="Bruce D."/>
            <person name="Han C."/>
            <person name="Tapia R."/>
            <person name="Sims D.R."/>
            <person name="Gilna P."/>
            <person name="Schmutz J."/>
            <person name="Larimer F."/>
            <person name="Land M."/>
            <person name="Hauser L."/>
            <person name="Kyrpides N."/>
            <person name="Kim E."/>
            <person name="Richardson P."/>
        </authorList>
    </citation>
    <scope>NUCLEOTIDE SEQUENCE [LARGE SCALE GENOMIC DNA]</scope>
    <source>
        <strain>ATCC BAA-1226 / DSM 17306 / VKM B-2378 / K5</strain>
    </source>
</reference>
<name>F16PA_PSYCK</name>
<protein>
    <recommendedName>
        <fullName evidence="1">Fructose-1,6-bisphosphatase class 1</fullName>
        <shortName evidence="1">FBPase class 1</shortName>
        <ecNumber evidence="1">3.1.3.11</ecNumber>
    </recommendedName>
    <alternativeName>
        <fullName evidence="1">D-fructose-1,6-bisphosphate 1-phosphohydrolase class 1</fullName>
    </alternativeName>
</protein>
<sequence>MTTLAQYLNTKATTPALNDVITTVTDVGKTISQLLRKGALADILGEAGNQNVQGEDQKKLDVLANDLLLDALAQNSHCAGVASEELDDATPANVDGSLLVLFDPLDGSSNIDINMAVGTIFSILPYQRQGQVSENSDFLQAGNQQLAAGYLLYGTSTVLTLTITDNVVMFSLDPDTNDYVLIEENVTIDADTSEYAINASNYRYWRAPMQQYIDELIAGETGVRGRDFNTRWVAAMVGDVHRILCRGGLFTYPFDTKYANKAGKLRLMYEANPMSLLIERASGGATDAVNRILDIEPIDIHQRVPVVLGSKNEVDYIKELHLNHTDK</sequence>
<comment type="catalytic activity">
    <reaction evidence="1">
        <text>beta-D-fructose 1,6-bisphosphate + H2O = beta-D-fructose 6-phosphate + phosphate</text>
        <dbReference type="Rhea" id="RHEA:11064"/>
        <dbReference type="ChEBI" id="CHEBI:15377"/>
        <dbReference type="ChEBI" id="CHEBI:32966"/>
        <dbReference type="ChEBI" id="CHEBI:43474"/>
        <dbReference type="ChEBI" id="CHEBI:57634"/>
        <dbReference type="EC" id="3.1.3.11"/>
    </reaction>
</comment>
<comment type="cofactor">
    <cofactor evidence="1">
        <name>Mg(2+)</name>
        <dbReference type="ChEBI" id="CHEBI:18420"/>
    </cofactor>
    <text evidence="1">Binds 2 magnesium ions per subunit.</text>
</comment>
<comment type="pathway">
    <text evidence="1">Carbohydrate biosynthesis; gluconeogenesis.</text>
</comment>
<comment type="subunit">
    <text evidence="1">Homotetramer.</text>
</comment>
<comment type="subcellular location">
    <subcellularLocation>
        <location evidence="1">Cytoplasm</location>
    </subcellularLocation>
</comment>
<comment type="similarity">
    <text evidence="1">Belongs to the FBPase class 1 family.</text>
</comment>
<dbReference type="EC" id="3.1.3.11" evidence="1"/>
<dbReference type="EMBL" id="CP000323">
    <property type="protein sequence ID" value="ABE74313.1"/>
    <property type="molecule type" value="Genomic_DNA"/>
</dbReference>
<dbReference type="RefSeq" id="WP_011512883.1">
    <property type="nucleotide sequence ID" value="NC_007969.1"/>
</dbReference>
<dbReference type="SMR" id="Q1QDE0"/>
<dbReference type="STRING" id="335284.Pcryo_0530"/>
<dbReference type="KEGG" id="pcr:Pcryo_0530"/>
<dbReference type="eggNOG" id="COG0158">
    <property type="taxonomic scope" value="Bacteria"/>
</dbReference>
<dbReference type="HOGENOM" id="CLU_039977_0_0_6"/>
<dbReference type="UniPathway" id="UPA00138"/>
<dbReference type="Proteomes" id="UP000002425">
    <property type="component" value="Chromosome"/>
</dbReference>
<dbReference type="GO" id="GO:0005829">
    <property type="term" value="C:cytosol"/>
    <property type="evidence" value="ECO:0007669"/>
    <property type="project" value="TreeGrafter"/>
</dbReference>
<dbReference type="GO" id="GO:0042132">
    <property type="term" value="F:fructose 1,6-bisphosphate 1-phosphatase activity"/>
    <property type="evidence" value="ECO:0007669"/>
    <property type="project" value="UniProtKB-UniRule"/>
</dbReference>
<dbReference type="GO" id="GO:0000287">
    <property type="term" value="F:magnesium ion binding"/>
    <property type="evidence" value="ECO:0007669"/>
    <property type="project" value="UniProtKB-UniRule"/>
</dbReference>
<dbReference type="GO" id="GO:0030388">
    <property type="term" value="P:fructose 1,6-bisphosphate metabolic process"/>
    <property type="evidence" value="ECO:0007669"/>
    <property type="project" value="TreeGrafter"/>
</dbReference>
<dbReference type="GO" id="GO:0006002">
    <property type="term" value="P:fructose 6-phosphate metabolic process"/>
    <property type="evidence" value="ECO:0007669"/>
    <property type="project" value="TreeGrafter"/>
</dbReference>
<dbReference type="GO" id="GO:0006000">
    <property type="term" value="P:fructose metabolic process"/>
    <property type="evidence" value="ECO:0007669"/>
    <property type="project" value="TreeGrafter"/>
</dbReference>
<dbReference type="GO" id="GO:0006094">
    <property type="term" value="P:gluconeogenesis"/>
    <property type="evidence" value="ECO:0007669"/>
    <property type="project" value="UniProtKB-UniRule"/>
</dbReference>
<dbReference type="GO" id="GO:0005986">
    <property type="term" value="P:sucrose biosynthetic process"/>
    <property type="evidence" value="ECO:0007669"/>
    <property type="project" value="TreeGrafter"/>
</dbReference>
<dbReference type="CDD" id="cd00354">
    <property type="entry name" value="FBPase"/>
    <property type="match status" value="1"/>
</dbReference>
<dbReference type="FunFam" id="3.40.190.80:FF:000011">
    <property type="entry name" value="Fructose-1,6-bisphosphatase class 1"/>
    <property type="match status" value="1"/>
</dbReference>
<dbReference type="Gene3D" id="3.40.190.80">
    <property type="match status" value="1"/>
</dbReference>
<dbReference type="Gene3D" id="3.30.540.10">
    <property type="entry name" value="Fructose-1,6-Bisphosphatase, subunit A, domain 1"/>
    <property type="match status" value="1"/>
</dbReference>
<dbReference type="HAMAP" id="MF_01855">
    <property type="entry name" value="FBPase_class1"/>
    <property type="match status" value="1"/>
</dbReference>
<dbReference type="InterPro" id="IPR044015">
    <property type="entry name" value="FBPase_C_dom"/>
</dbReference>
<dbReference type="InterPro" id="IPR000146">
    <property type="entry name" value="FBPase_class-1"/>
</dbReference>
<dbReference type="InterPro" id="IPR033391">
    <property type="entry name" value="FBPase_N"/>
</dbReference>
<dbReference type="InterPro" id="IPR028343">
    <property type="entry name" value="FBPtase"/>
</dbReference>
<dbReference type="NCBIfam" id="NF006779">
    <property type="entry name" value="PRK09293.1-3"/>
    <property type="match status" value="1"/>
</dbReference>
<dbReference type="PANTHER" id="PTHR11556">
    <property type="entry name" value="FRUCTOSE-1,6-BISPHOSPHATASE-RELATED"/>
    <property type="match status" value="1"/>
</dbReference>
<dbReference type="PANTHER" id="PTHR11556:SF35">
    <property type="entry name" value="SEDOHEPTULOSE-1,7-BISPHOSPHATASE, CHLOROPLASTIC"/>
    <property type="match status" value="1"/>
</dbReference>
<dbReference type="Pfam" id="PF00316">
    <property type="entry name" value="FBPase"/>
    <property type="match status" value="1"/>
</dbReference>
<dbReference type="Pfam" id="PF18913">
    <property type="entry name" value="FBPase_C"/>
    <property type="match status" value="1"/>
</dbReference>
<dbReference type="PIRSF" id="PIRSF500210">
    <property type="entry name" value="FBPtase"/>
    <property type="match status" value="1"/>
</dbReference>
<dbReference type="PIRSF" id="PIRSF000904">
    <property type="entry name" value="FBPtase_SBPase"/>
    <property type="match status" value="1"/>
</dbReference>
<dbReference type="PRINTS" id="PR00115">
    <property type="entry name" value="F16BPHPHTASE"/>
</dbReference>
<dbReference type="SUPFAM" id="SSF56655">
    <property type="entry name" value="Carbohydrate phosphatase"/>
    <property type="match status" value="1"/>
</dbReference>
<gene>
    <name evidence="1" type="primary">fbp</name>
    <name type="ordered locus">Pcryo_0530</name>
</gene>
<keyword id="KW-0119">Carbohydrate metabolism</keyword>
<keyword id="KW-0963">Cytoplasm</keyword>
<keyword id="KW-0378">Hydrolase</keyword>
<keyword id="KW-0460">Magnesium</keyword>
<keyword id="KW-0479">Metal-binding</keyword>
<evidence type="ECO:0000255" key="1">
    <source>
        <dbReference type="HAMAP-Rule" id="MF_01855"/>
    </source>
</evidence>